<reference key="1">
    <citation type="journal article" date="2004" name="Science">
        <title>The Ashbya gossypii genome as a tool for mapping the ancient Saccharomyces cerevisiae genome.</title>
        <authorList>
            <person name="Dietrich F.S."/>
            <person name="Voegeli S."/>
            <person name="Brachat S."/>
            <person name="Lerch A."/>
            <person name="Gates K."/>
            <person name="Steiner S."/>
            <person name="Mohr C."/>
            <person name="Poehlmann R."/>
            <person name="Luedi P."/>
            <person name="Choi S."/>
            <person name="Wing R.A."/>
            <person name="Flavier A."/>
            <person name="Gaffney T.D."/>
            <person name="Philippsen P."/>
        </authorList>
    </citation>
    <scope>NUCLEOTIDE SEQUENCE [LARGE SCALE GENOMIC DNA]</scope>
    <source>
        <strain>ATCC 10895 / CBS 109.51 / FGSC 9923 / NRRL Y-1056</strain>
    </source>
</reference>
<reference key="2">
    <citation type="journal article" date="2013" name="G3 (Bethesda)">
        <title>Genomes of Ashbya fungi isolated from insects reveal four mating-type loci, numerous translocations, lack of transposons, and distinct gene duplications.</title>
        <authorList>
            <person name="Dietrich F.S."/>
            <person name="Voegeli S."/>
            <person name="Kuo S."/>
            <person name="Philippsen P."/>
        </authorList>
    </citation>
    <scope>GENOME REANNOTATION</scope>
    <scope>SEQUENCE REVISION TO 616</scope>
    <source>
        <strain>ATCC 10895 / CBS 109.51 / FGSC 9923 / NRRL Y-1056</strain>
    </source>
</reference>
<accession>Q75DU5</accession>
<keyword id="KW-0539">Nucleus</keyword>
<keyword id="KW-1185">Reference proteome</keyword>
<keyword id="KW-0690">Ribosome biogenesis</keyword>
<keyword id="KW-0698">rRNA processing</keyword>
<name>RIX1_EREGS</name>
<protein>
    <recommendedName>
        <fullName>Pre-rRNA-processing protein RIX1</fullName>
    </recommendedName>
</protein>
<sequence length="764" mass="85366">MTSQVVPLSTFVQHLESCEGYEFRTMIKMLASPAYAKQQLLKDELSVFMAKVLKLLRSKDDYQVWKGCHIATVFCTYNPVVLCSFGGELMGILYRALEDATKYYGDSVQTEQRKVMVRALVKTLDTLMDLIRGKPSLTREALTPHLSAIIPMLISFGRCEPNLSLPVIKKLLSKHSTTFRPHVGKLKQLLTELYGHYQSLDPVTRKVVCDTAAYLHLTQKPGNNANEHQAHHKSFPDEHWRAGLFSVLSQFGPVVRLWGEILDIGSDENLARLLETLPRDTANDTSPLLPALTVDINKPVTLWHISARLEQLTDMVESFIRLPTLFPTRIPLGELVKVSEILLSLTTNYLPLKRGLRRDAALTGSIRSALPETQLQGIRLLRCLSDHIGKNLITYMPAILSSMELFIPLKDKKTSIDYQKCVDLQNGLLQLTALMNSIAQHLGHKVEEMSLAIKLVDICAYIIEHKQNLDSAFSSTSGTAKAAGGAKKKEYKAKTGSMSDLFSHPHKFLHPVPLENYTVVNTYYNMALTHWKLPSTQQAKITKYCIYYSLSFKEKLGYIPQTFIELLNTIVLFPGKDRFSILPIAVHLLKETGDPVFDVLCNPKLPLEMIQIRRQPTSSEDDTATSEAEEYAAPADQDDEHLSDDEHTTVDDGVATNAVMGLNNLVSSETLRSEQDSALETQHPEQARTSNLVPDEASEGREDARIFKKRSSSDEQDPPSKRTRAVAAQTPVPAAVPVDNGEPESDDGSDFEIPEIELSDADEE</sequence>
<proteinExistence type="inferred from homology"/>
<feature type="chain" id="PRO_0000308914" description="Pre-rRNA-processing protein RIX1">
    <location>
        <begin position="1"/>
        <end position="764"/>
    </location>
</feature>
<feature type="region of interest" description="Disordered" evidence="2">
    <location>
        <begin position="611"/>
        <end position="648"/>
    </location>
</feature>
<feature type="region of interest" description="Disordered" evidence="2">
    <location>
        <begin position="670"/>
        <end position="764"/>
    </location>
</feature>
<feature type="compositionally biased region" description="Acidic residues" evidence="2">
    <location>
        <begin position="619"/>
        <end position="643"/>
    </location>
</feature>
<feature type="compositionally biased region" description="Polar residues" evidence="2">
    <location>
        <begin position="670"/>
        <end position="680"/>
    </location>
</feature>
<feature type="compositionally biased region" description="Low complexity" evidence="2">
    <location>
        <begin position="725"/>
        <end position="738"/>
    </location>
</feature>
<feature type="compositionally biased region" description="Acidic residues" evidence="2">
    <location>
        <begin position="741"/>
        <end position="764"/>
    </location>
</feature>
<comment type="function">
    <text evidence="1">Component of the RIX1 complex required for processing of ITS2 sequences from 35S pre-rRNA and the nucleoplasmic transit of the pre-60S ribosomal subunits. Regulates pre-60S association of the critical remodeling factor MDN1.</text>
</comment>
<comment type="subunit">
    <text evidence="1">Component of the RIX1 complex, composed of IPI1, RIX1/IPI2 and IPI3 in a 1:2:2 stoichiometry. The complex interacts (via RIX1) with MDN1 (via its hexameric AAA ATPase ring) and the pre-60S ribosome particles.</text>
</comment>
<comment type="subcellular location">
    <subcellularLocation>
        <location evidence="1">Nucleus</location>
    </subcellularLocation>
</comment>
<comment type="similarity">
    <text evidence="3">Belongs to the RIX1/PELP1 family.</text>
</comment>
<dbReference type="EMBL" id="AE016815">
    <property type="protein sequence ID" value="AAS50699.2"/>
    <property type="molecule type" value="Genomic_DNA"/>
</dbReference>
<dbReference type="RefSeq" id="NP_982875.2">
    <property type="nucleotide sequence ID" value="NM_208228.2"/>
</dbReference>
<dbReference type="SMR" id="Q75DU5"/>
<dbReference type="FunCoup" id="Q75DU5">
    <property type="interactions" value="342"/>
</dbReference>
<dbReference type="STRING" id="284811.Q75DU5"/>
<dbReference type="EnsemblFungi" id="AAS50699">
    <property type="protein sequence ID" value="AAS50699"/>
    <property type="gene ID" value="AGOS_ABL072C"/>
</dbReference>
<dbReference type="GeneID" id="4618956"/>
<dbReference type="KEGG" id="ago:AGOS_ABL072C"/>
<dbReference type="eggNOG" id="ENOG502R65X">
    <property type="taxonomic scope" value="Eukaryota"/>
</dbReference>
<dbReference type="HOGENOM" id="CLU_020084_0_0_1"/>
<dbReference type="InParanoid" id="Q75DU5"/>
<dbReference type="OMA" id="WCGINLI"/>
<dbReference type="OrthoDB" id="20900at2759"/>
<dbReference type="Proteomes" id="UP000000591">
    <property type="component" value="Chromosome II"/>
</dbReference>
<dbReference type="GO" id="GO:0005829">
    <property type="term" value="C:cytosol"/>
    <property type="evidence" value="ECO:0007669"/>
    <property type="project" value="EnsemblFungi"/>
</dbReference>
<dbReference type="GO" id="GO:0005654">
    <property type="term" value="C:nucleoplasm"/>
    <property type="evidence" value="ECO:0007669"/>
    <property type="project" value="EnsemblFungi"/>
</dbReference>
<dbReference type="GO" id="GO:0005634">
    <property type="term" value="C:nucleus"/>
    <property type="evidence" value="ECO:0000318"/>
    <property type="project" value="GO_Central"/>
</dbReference>
<dbReference type="GO" id="GO:0120330">
    <property type="term" value="C:rixosome complex"/>
    <property type="evidence" value="ECO:0007669"/>
    <property type="project" value="EnsemblFungi"/>
</dbReference>
<dbReference type="GO" id="GO:0003682">
    <property type="term" value="F:chromatin binding"/>
    <property type="evidence" value="ECO:0007669"/>
    <property type="project" value="EnsemblFungi"/>
</dbReference>
<dbReference type="GO" id="GO:0006267">
    <property type="term" value="P:pre-replicative complex assembly involved in nuclear cell cycle DNA replication"/>
    <property type="evidence" value="ECO:0007669"/>
    <property type="project" value="EnsemblFungi"/>
</dbReference>
<dbReference type="GO" id="GO:0030174">
    <property type="term" value="P:regulation of DNA-templated DNA replication initiation"/>
    <property type="evidence" value="ECO:0007669"/>
    <property type="project" value="EnsemblFungi"/>
</dbReference>
<dbReference type="GO" id="GO:0000027">
    <property type="term" value="P:ribosomal large subunit assembly"/>
    <property type="evidence" value="ECO:0007669"/>
    <property type="project" value="EnsemblFungi"/>
</dbReference>
<dbReference type="GO" id="GO:0006364">
    <property type="term" value="P:rRNA processing"/>
    <property type="evidence" value="ECO:0000318"/>
    <property type="project" value="GO_Central"/>
</dbReference>
<dbReference type="InterPro" id="IPR016024">
    <property type="entry name" value="ARM-type_fold"/>
</dbReference>
<dbReference type="InterPro" id="IPR012583">
    <property type="entry name" value="RIX1_N"/>
</dbReference>
<dbReference type="PANTHER" id="PTHR34105">
    <property type="entry name" value="PROLINE-, GLUTAMIC ACID- AND LEUCINE-RICH PROTEIN 1"/>
    <property type="match status" value="1"/>
</dbReference>
<dbReference type="PANTHER" id="PTHR34105:SF1">
    <property type="entry name" value="PROLINE-, GLUTAMIC ACID- AND LEUCINE-RICH PROTEIN 1"/>
    <property type="match status" value="1"/>
</dbReference>
<dbReference type="Pfam" id="PF08167">
    <property type="entry name" value="RIX1"/>
    <property type="match status" value="1"/>
</dbReference>
<dbReference type="SUPFAM" id="SSF48371">
    <property type="entry name" value="ARM repeat"/>
    <property type="match status" value="1"/>
</dbReference>
<evidence type="ECO:0000250" key="1">
    <source>
        <dbReference type="UniProtKB" id="P38883"/>
    </source>
</evidence>
<evidence type="ECO:0000256" key="2">
    <source>
        <dbReference type="SAM" id="MobiDB-lite"/>
    </source>
</evidence>
<evidence type="ECO:0000305" key="3"/>
<organism>
    <name type="scientific">Eremothecium gossypii (strain ATCC 10895 / CBS 109.51 / FGSC 9923 / NRRL Y-1056)</name>
    <name type="common">Yeast</name>
    <name type="synonym">Ashbya gossypii</name>
    <dbReference type="NCBI Taxonomy" id="284811"/>
    <lineage>
        <taxon>Eukaryota</taxon>
        <taxon>Fungi</taxon>
        <taxon>Dikarya</taxon>
        <taxon>Ascomycota</taxon>
        <taxon>Saccharomycotina</taxon>
        <taxon>Saccharomycetes</taxon>
        <taxon>Saccharomycetales</taxon>
        <taxon>Saccharomycetaceae</taxon>
        <taxon>Eremothecium</taxon>
    </lineage>
</organism>
<gene>
    <name type="primary">RIX1</name>
    <name type="ordered locus">ABL072C</name>
</gene>